<evidence type="ECO:0000250" key="1"/>
<evidence type="ECO:0000255" key="2"/>
<evidence type="ECO:0000305" key="3"/>
<feature type="signal peptide" evidence="1">
    <location>
        <begin position="1"/>
        <end position="37"/>
    </location>
</feature>
<feature type="chain" id="PRO_0000023812" description="Cytochrome f">
    <location>
        <begin position="38"/>
        <end position="321"/>
    </location>
</feature>
<feature type="transmembrane region" description="Helical" evidence="2">
    <location>
        <begin position="287"/>
        <end position="306"/>
    </location>
</feature>
<feature type="binding site" description="axial binding residue" evidence="1">
    <location>
        <position position="38"/>
    </location>
    <ligand>
        <name>heme</name>
        <dbReference type="ChEBI" id="CHEBI:30413"/>
    </ligand>
    <ligandPart>
        <name>Fe</name>
        <dbReference type="ChEBI" id="CHEBI:18248"/>
    </ligandPart>
</feature>
<feature type="binding site" description="covalent" evidence="1">
    <location>
        <position position="58"/>
    </location>
    <ligand>
        <name>heme</name>
        <dbReference type="ChEBI" id="CHEBI:30413"/>
    </ligand>
</feature>
<feature type="binding site" description="covalent" evidence="1">
    <location>
        <position position="61"/>
    </location>
    <ligand>
        <name>heme</name>
        <dbReference type="ChEBI" id="CHEBI:30413"/>
    </ligand>
</feature>
<feature type="binding site" description="axial binding residue" evidence="1">
    <location>
        <position position="62"/>
    </location>
    <ligand>
        <name>heme</name>
        <dbReference type="ChEBI" id="CHEBI:30413"/>
    </ligand>
    <ligandPart>
        <name>Fe</name>
        <dbReference type="ChEBI" id="CHEBI:18248"/>
    </ligandPart>
</feature>
<organism>
    <name type="scientific">Cyanophora paradoxa</name>
    <dbReference type="NCBI Taxonomy" id="2762"/>
    <lineage>
        <taxon>Eukaryota</taxon>
        <taxon>Glaucocystophyceae</taxon>
        <taxon>Cyanophoraceae</taxon>
        <taxon>Cyanophora</taxon>
    </lineage>
</organism>
<keyword id="KW-0194">Cyanelle</keyword>
<keyword id="KW-0249">Electron transport</keyword>
<keyword id="KW-0349">Heme</keyword>
<keyword id="KW-0408">Iron</keyword>
<keyword id="KW-0472">Membrane</keyword>
<keyword id="KW-0479">Metal-binding</keyword>
<keyword id="KW-0602">Photosynthesis</keyword>
<keyword id="KW-0934">Plastid</keyword>
<keyword id="KW-0732">Signal</keyword>
<keyword id="KW-0793">Thylakoid</keyword>
<keyword id="KW-0812">Transmembrane</keyword>
<keyword id="KW-1133">Transmembrane helix</keyword>
<keyword id="KW-0813">Transport</keyword>
<gene>
    <name type="primary">petA</name>
</gene>
<geneLocation type="cyanelle"/>
<name>CYF_CYAPA</name>
<accession>P48123</accession>
<protein>
    <recommendedName>
        <fullName>Cytochrome f</fullName>
    </recommendedName>
</protein>
<comment type="function">
    <text evidence="1">Component of the cytochrome b6-f complex, which mediates electron transfer between photosystem II (PSII) and photosystem I (PSI), cyclic electron flow around PSI, and state transitions.</text>
</comment>
<comment type="cofactor">
    <cofactor evidence="1">
        <name>heme</name>
        <dbReference type="ChEBI" id="CHEBI:30413"/>
    </cofactor>
    <text evidence="1">Binds 1 heme group covalently.</text>
</comment>
<comment type="subunit">
    <text evidence="1">The 4 large subunits of the cytochrome b6-f complex are cytochrome b6, subunit IV (17 kDa polypeptide, petD), cytochrome f and the Rieske protein, while the 4 small subunits are PetG, PetL, PetM and PetN. The complex functions as a dimer (By similarity).</text>
</comment>
<comment type="subcellular location">
    <subcellularLocation>
        <location evidence="1">Plastid</location>
        <location evidence="1">Cyanelle thylakoid membrane</location>
        <topology evidence="1">Single-pass membrane protein</topology>
    </subcellularLocation>
</comment>
<comment type="similarity">
    <text evidence="3">Belongs to the cytochrome f family.</text>
</comment>
<sequence length="321" mass="35124">MKIYRQIKQSFSITKIVFSFFISLLLNLVAQPTICQAFPIYAQQAYQIPREATGRIVCANCHLGKKPVEIEVPQAVLPNTVFEAVVKIPIDKGAQQIQANGQKGPLNVGAVLMLPEGFKLAPAERLSEELKAKTAGLYFQPYSADKENILVIGPIPGDKNQEIIFPILSPNPETNKNVKYLKYQLHVGGNRGRGQVSPTGEKTNNTIYNASVNGRISEITKLENGGYEITITTKNGESKIETIPAGPSLVVKKGQTIKADQPLTIDPNVGGFGQMDTEIVLQSAGRVQGLIAFFISVVLAQIFLVLKKKQFEKVQAAEMNF</sequence>
<dbReference type="EMBL" id="U30821">
    <property type="protein sequence ID" value="AAA81275.1"/>
    <property type="molecule type" value="Genomic_DNA"/>
</dbReference>
<dbReference type="PIR" id="T06932">
    <property type="entry name" value="T06932"/>
</dbReference>
<dbReference type="RefSeq" id="NP_043244.1">
    <property type="nucleotide sequence ID" value="NC_001675.1"/>
</dbReference>
<dbReference type="SMR" id="P48123"/>
<dbReference type="GeneID" id="801561"/>
<dbReference type="GO" id="GO:0033115">
    <property type="term" value="C:cyanelle thylakoid membrane"/>
    <property type="evidence" value="ECO:0007669"/>
    <property type="project" value="UniProtKB-SubCell"/>
</dbReference>
<dbReference type="GO" id="GO:0009055">
    <property type="term" value="F:electron transfer activity"/>
    <property type="evidence" value="ECO:0007669"/>
    <property type="project" value="UniProtKB-UniRule"/>
</dbReference>
<dbReference type="GO" id="GO:0020037">
    <property type="term" value="F:heme binding"/>
    <property type="evidence" value="ECO:0007669"/>
    <property type="project" value="InterPro"/>
</dbReference>
<dbReference type="GO" id="GO:0005506">
    <property type="term" value="F:iron ion binding"/>
    <property type="evidence" value="ECO:0007669"/>
    <property type="project" value="InterPro"/>
</dbReference>
<dbReference type="GO" id="GO:0015979">
    <property type="term" value="P:photosynthesis"/>
    <property type="evidence" value="ECO:0007669"/>
    <property type="project" value="UniProtKB-UniRule"/>
</dbReference>
<dbReference type="FunFam" id="1.20.5.700:FF:000001">
    <property type="entry name" value="Cytochrome f"/>
    <property type="match status" value="1"/>
</dbReference>
<dbReference type="FunFam" id="2.60.40.830:FF:000001">
    <property type="entry name" value="Cytochrome f"/>
    <property type="match status" value="1"/>
</dbReference>
<dbReference type="Gene3D" id="2.40.50.100">
    <property type="match status" value="1"/>
</dbReference>
<dbReference type="Gene3D" id="2.60.40.830">
    <property type="entry name" value="Cytochrome f large domain"/>
    <property type="match status" value="1"/>
</dbReference>
<dbReference type="Gene3D" id="1.20.5.700">
    <property type="entry name" value="Single helix bin"/>
    <property type="match status" value="1"/>
</dbReference>
<dbReference type="HAMAP" id="MF_00610">
    <property type="entry name" value="Cytb6_f_cytF"/>
    <property type="match status" value="1"/>
</dbReference>
<dbReference type="InterPro" id="IPR024058">
    <property type="entry name" value="Cyt-f_TM"/>
</dbReference>
<dbReference type="InterPro" id="IPR002325">
    <property type="entry name" value="Cyt_f"/>
</dbReference>
<dbReference type="InterPro" id="IPR024094">
    <property type="entry name" value="Cyt_f_lg_dom"/>
</dbReference>
<dbReference type="InterPro" id="IPR036826">
    <property type="entry name" value="Cyt_f_lg_dom_sf"/>
</dbReference>
<dbReference type="InterPro" id="IPR011054">
    <property type="entry name" value="Rudment_hybrid_motif"/>
</dbReference>
<dbReference type="PANTHER" id="PTHR33288">
    <property type="match status" value="1"/>
</dbReference>
<dbReference type="PANTHER" id="PTHR33288:SF10">
    <property type="entry name" value="CYTOCHROME F"/>
    <property type="match status" value="1"/>
</dbReference>
<dbReference type="Pfam" id="PF01333">
    <property type="entry name" value="Apocytochr_F_C"/>
    <property type="match status" value="1"/>
</dbReference>
<dbReference type="Pfam" id="PF16639">
    <property type="entry name" value="Apocytochr_F_N"/>
    <property type="match status" value="1"/>
</dbReference>
<dbReference type="PRINTS" id="PR00610">
    <property type="entry name" value="CYTOCHROMEF"/>
</dbReference>
<dbReference type="SUPFAM" id="SSF103431">
    <property type="entry name" value="Cytochrome f subunit of the cytochrome b6f complex, transmembrane anchor"/>
    <property type="match status" value="1"/>
</dbReference>
<dbReference type="SUPFAM" id="SSF49441">
    <property type="entry name" value="Cytochrome f, large domain"/>
    <property type="match status" value="1"/>
</dbReference>
<dbReference type="SUPFAM" id="SSF51246">
    <property type="entry name" value="Rudiment single hybrid motif"/>
    <property type="match status" value="1"/>
</dbReference>
<dbReference type="PROSITE" id="PS51010">
    <property type="entry name" value="CYTF"/>
    <property type="match status" value="1"/>
</dbReference>
<reference key="1">
    <citation type="journal article" date="1995" name="Plant Mol. Biol. Rep.">
        <title>Nucleotide sequence of the cyanelle DNA from Cyanophora paradoxa.</title>
        <authorList>
            <person name="Stirewalt V.L."/>
            <person name="Michalowski C.B."/>
            <person name="Loeffelhardt W."/>
            <person name="Bohnert H.J."/>
            <person name="Bryant D.A."/>
        </authorList>
    </citation>
    <scope>NUCLEOTIDE SEQUENCE [LARGE SCALE GENOMIC DNA]</scope>
    <source>
        <strain>UTEX LB 555 / Pringsheim</strain>
    </source>
</reference>
<reference key="2">
    <citation type="book" date="1997" name="Eukaryotism and symbiosis">
        <title>The complete sequence of the cyanelle genome of Cyanophora paradoxa: the genetic complexity of a primitive plastid.</title>
        <editorList>
            <person name="Schenk H.E.A."/>
            <person name="Herrmann R."/>
            <person name="Jeon K.W."/>
            <person name="Mueller N.E."/>
            <person name="Schwemmler W."/>
        </editorList>
        <authorList>
            <person name="Loeffelhardt W."/>
            <person name="Stirewalt V.L."/>
            <person name="Michalowski C.B."/>
            <person name="Annarella M."/>
            <person name="Farley J.Y."/>
            <person name="Schluchter W.M."/>
            <person name="Chung S."/>
            <person name="Newmann-Spallart C."/>
            <person name="Steiner J.M."/>
            <person name="Jakowitsch J."/>
            <person name="Bohnert H.J."/>
            <person name="Bryant D.A."/>
        </authorList>
    </citation>
    <scope>NUCLEOTIDE SEQUENCE [LARGE SCALE GENOMIC DNA]</scope>
    <source>
        <strain>UTEX LB 555 / Pringsheim</strain>
    </source>
</reference>
<proteinExistence type="inferred from homology"/>